<sequence length="866" mass="97661">MQKISVASMLKPVRLHTVREEAVAGAEAKAKVGAKTGAKMGAKTGAKSGLEADTAAGETLDAGASSEVLQLHVPRSRSHSQSISKSNSVISGSSYSSAGRIIGVNSARRPSDNLMLQISAHSDGDSDDEAGGDTPSKAAETHANAVPKPVRPTSDNSIRSNDTALFSANPTDSSNGSASDSDYDEQHDTSMVSGKSATTMMSPSLALSIGSGMTRSDVITPNKYSNLDSGSLGIAETPKARYIFSNVNRNRSQSSIKSSENSSPLRFVDGPNQRRTLPGASNTYLHSNSTSAILPTSRAMTPSHRYRLRKEMRDVALKKSIKQKEKFYEEQDSNLDLKDDNVDASLIWNIPMASYSTSSFLNTTDSKHKDTNIKVTSPENNRVINNKIERQDRRFPQKNQVHSRSQPNLPRLQQRPMKRPVHQQQQPITCFEDIPATPIPGVSNVTDTEFIQDTIQNLSSVYLHSQEMKSRGQLEKRQSSTQYLPLNVKEMSDLGMEDLVLVSDKKLEAVSSSRPTYLPPKSTKEKQMHEHEISKYMKMASDEQIQRKISQTKHMEEDKANHERYAHLLQRGITRKSSLFDLRKISWKTAISDELRCSIYHTILESDAQLVSSKYLENFDYLNSILDQMDFPTDKESEIKQIIEKNITTKIGYSSVKDKELTLLLKLKSISKQGLMVGDAQLFHNFLNCKSFKTLKDIWEIANLIQLTCFNDTCKDKFDSRIIDPRGITARILHSPSFKAEMTSSIMNFNTWWNIMSRIDNNLFMWIMDIIVIENCQCFTNKQINKDQLRDKNWDYYVNKYVVVNYKILASLAASVLLDYHFGFNDLKHLERIDKKFCIPLYSEDTECNIINSSFIKKWHHQYKKY</sequence>
<gene>
    <name type="primary">SBE2</name>
    <name type="ordered locus">CAGL0A02486g</name>
</gene>
<name>SBE2_CANGA</name>
<protein>
    <recommendedName>
        <fullName>Protein SBE2</fullName>
    </recommendedName>
</protein>
<keyword id="KW-0961">Cell wall biogenesis/degradation</keyword>
<keyword id="KW-0333">Golgi apparatus</keyword>
<keyword id="KW-0653">Protein transport</keyword>
<keyword id="KW-1185">Reference proteome</keyword>
<keyword id="KW-0813">Transport</keyword>
<reference key="1">
    <citation type="journal article" date="2004" name="Nature">
        <title>Genome evolution in yeasts.</title>
        <authorList>
            <person name="Dujon B."/>
            <person name="Sherman D."/>
            <person name="Fischer G."/>
            <person name="Durrens P."/>
            <person name="Casaregola S."/>
            <person name="Lafontaine I."/>
            <person name="de Montigny J."/>
            <person name="Marck C."/>
            <person name="Neuveglise C."/>
            <person name="Talla E."/>
            <person name="Goffard N."/>
            <person name="Frangeul L."/>
            <person name="Aigle M."/>
            <person name="Anthouard V."/>
            <person name="Babour A."/>
            <person name="Barbe V."/>
            <person name="Barnay S."/>
            <person name="Blanchin S."/>
            <person name="Beckerich J.-M."/>
            <person name="Beyne E."/>
            <person name="Bleykasten C."/>
            <person name="Boisrame A."/>
            <person name="Boyer J."/>
            <person name="Cattolico L."/>
            <person name="Confanioleri F."/>
            <person name="de Daruvar A."/>
            <person name="Despons L."/>
            <person name="Fabre E."/>
            <person name="Fairhead C."/>
            <person name="Ferry-Dumazet H."/>
            <person name="Groppi A."/>
            <person name="Hantraye F."/>
            <person name="Hennequin C."/>
            <person name="Jauniaux N."/>
            <person name="Joyet P."/>
            <person name="Kachouri R."/>
            <person name="Kerrest A."/>
            <person name="Koszul R."/>
            <person name="Lemaire M."/>
            <person name="Lesur I."/>
            <person name="Ma L."/>
            <person name="Muller H."/>
            <person name="Nicaud J.-M."/>
            <person name="Nikolski M."/>
            <person name="Oztas S."/>
            <person name="Ozier-Kalogeropoulos O."/>
            <person name="Pellenz S."/>
            <person name="Potier S."/>
            <person name="Richard G.-F."/>
            <person name="Straub M.-L."/>
            <person name="Suleau A."/>
            <person name="Swennen D."/>
            <person name="Tekaia F."/>
            <person name="Wesolowski-Louvel M."/>
            <person name="Westhof E."/>
            <person name="Wirth B."/>
            <person name="Zeniou-Meyer M."/>
            <person name="Zivanovic Y."/>
            <person name="Bolotin-Fukuhara M."/>
            <person name="Thierry A."/>
            <person name="Bouchier C."/>
            <person name="Caudron B."/>
            <person name="Scarpelli C."/>
            <person name="Gaillardin C."/>
            <person name="Weissenbach J."/>
            <person name="Wincker P."/>
            <person name="Souciet J.-L."/>
        </authorList>
    </citation>
    <scope>NUCLEOTIDE SEQUENCE [LARGE SCALE GENOMIC DNA]</scope>
    <source>
        <strain>ATCC 2001 / BCRC 20586 / JCM 3761 / NBRC 0622 / NRRL Y-65 / CBS 138</strain>
    </source>
</reference>
<accession>Q6FY30</accession>
<dbReference type="EMBL" id="CR380947">
    <property type="protein sequence ID" value="CAG57765.1"/>
    <property type="molecule type" value="Genomic_DNA"/>
</dbReference>
<dbReference type="RefSeq" id="XP_444872.1">
    <property type="nucleotide sequence ID" value="XM_444872.1"/>
</dbReference>
<dbReference type="STRING" id="284593.Q6FY30"/>
<dbReference type="EnsemblFungi" id="CAGL0A02486g-T">
    <property type="protein sequence ID" value="CAGL0A02486g-T-p1"/>
    <property type="gene ID" value="CAGL0A02486g"/>
</dbReference>
<dbReference type="KEGG" id="cgr:2886482"/>
<dbReference type="CGD" id="CAL0126889">
    <property type="gene designation" value="CAGL0A02486g"/>
</dbReference>
<dbReference type="VEuPathDB" id="FungiDB:CAGL0A02486g"/>
<dbReference type="eggNOG" id="ENOG502QR4N">
    <property type="taxonomic scope" value="Eukaryota"/>
</dbReference>
<dbReference type="HOGENOM" id="CLU_019068_0_0_1"/>
<dbReference type="InParanoid" id="Q6FY30"/>
<dbReference type="OMA" id="FNTWWNI"/>
<dbReference type="Proteomes" id="UP000002428">
    <property type="component" value="Chromosome A"/>
</dbReference>
<dbReference type="GO" id="GO:0005794">
    <property type="term" value="C:Golgi apparatus"/>
    <property type="evidence" value="ECO:0007669"/>
    <property type="project" value="UniProtKB-SubCell"/>
</dbReference>
<dbReference type="GO" id="GO:0031505">
    <property type="term" value="P:fungal-type cell wall organization"/>
    <property type="evidence" value="ECO:0007669"/>
    <property type="project" value="EnsemblFungi"/>
</dbReference>
<dbReference type="GO" id="GO:0015031">
    <property type="term" value="P:protein transport"/>
    <property type="evidence" value="ECO:0007669"/>
    <property type="project" value="UniProtKB-KW"/>
</dbReference>
<dbReference type="InterPro" id="IPR031403">
    <property type="entry name" value="Sbe2/Sbe22_C"/>
</dbReference>
<dbReference type="InterPro" id="IPR053949">
    <property type="entry name" value="SBE2/SBE22_M"/>
</dbReference>
<dbReference type="InterPro" id="IPR053948">
    <property type="entry name" value="SBE2/SBE22_N"/>
</dbReference>
<dbReference type="Pfam" id="PF17076">
    <property type="entry name" value="SBE2_C"/>
    <property type="match status" value="1"/>
</dbReference>
<dbReference type="Pfam" id="PF22874">
    <property type="entry name" value="SBE2_M"/>
    <property type="match status" value="1"/>
</dbReference>
<dbReference type="Pfam" id="PF22876">
    <property type="entry name" value="SBE2_N"/>
    <property type="match status" value="1"/>
</dbReference>
<comment type="function">
    <text evidence="1">With SBE22, is involved in cell wall integrity and polarity processes like bud growth.</text>
</comment>
<comment type="subcellular location">
    <subcellularLocation>
        <location evidence="1">Golgi apparatus</location>
    </subcellularLocation>
</comment>
<comment type="similarity">
    <text evidence="3">Belongs to the SBE2 family.</text>
</comment>
<organism>
    <name type="scientific">Candida glabrata (strain ATCC 2001 / BCRC 20586 / JCM 3761 / NBRC 0622 / NRRL Y-65 / CBS 138)</name>
    <name type="common">Yeast</name>
    <name type="synonym">Nakaseomyces glabratus</name>
    <dbReference type="NCBI Taxonomy" id="284593"/>
    <lineage>
        <taxon>Eukaryota</taxon>
        <taxon>Fungi</taxon>
        <taxon>Dikarya</taxon>
        <taxon>Ascomycota</taxon>
        <taxon>Saccharomycotina</taxon>
        <taxon>Saccharomycetes</taxon>
        <taxon>Saccharomycetales</taxon>
        <taxon>Saccharomycetaceae</taxon>
        <taxon>Nakaseomyces</taxon>
    </lineage>
</organism>
<evidence type="ECO:0000250" key="1"/>
<evidence type="ECO:0000256" key="2">
    <source>
        <dbReference type="SAM" id="MobiDB-lite"/>
    </source>
</evidence>
<evidence type="ECO:0000305" key="3"/>
<proteinExistence type="inferred from homology"/>
<feature type="chain" id="PRO_0000320504" description="Protein SBE2">
    <location>
        <begin position="1"/>
        <end position="866"/>
    </location>
</feature>
<feature type="region of interest" description="Disordered" evidence="2">
    <location>
        <begin position="24"/>
        <end position="49"/>
    </location>
</feature>
<feature type="region of interest" description="Disordered" evidence="2">
    <location>
        <begin position="72"/>
        <end position="94"/>
    </location>
</feature>
<feature type="region of interest" description="Disordered" evidence="2">
    <location>
        <begin position="119"/>
        <end position="199"/>
    </location>
</feature>
<feature type="region of interest" description="Disordered" evidence="2">
    <location>
        <begin position="249"/>
        <end position="282"/>
    </location>
</feature>
<feature type="region of interest" description="Disordered" evidence="2">
    <location>
        <begin position="390"/>
        <end position="424"/>
    </location>
</feature>
<feature type="compositionally biased region" description="Low complexity" evidence="2">
    <location>
        <begin position="79"/>
        <end position="94"/>
    </location>
</feature>
<feature type="compositionally biased region" description="Polar residues" evidence="2">
    <location>
        <begin position="153"/>
        <end position="180"/>
    </location>
</feature>
<feature type="compositionally biased region" description="Polar residues" evidence="2">
    <location>
        <begin position="189"/>
        <end position="199"/>
    </location>
</feature>
<feature type="compositionally biased region" description="Low complexity" evidence="2">
    <location>
        <begin position="252"/>
        <end position="263"/>
    </location>
</feature>
<feature type="compositionally biased region" description="Polar residues" evidence="2">
    <location>
        <begin position="273"/>
        <end position="282"/>
    </location>
</feature>
<feature type="compositionally biased region" description="Polar residues" evidence="2">
    <location>
        <begin position="397"/>
        <end position="408"/>
    </location>
</feature>